<accession>Q8AXV6</accession>
<gene>
    <name type="primary">hey1</name>
</gene>
<evidence type="ECO:0000250" key="1">
    <source>
        <dbReference type="UniProtKB" id="Q9WV93"/>
    </source>
</evidence>
<evidence type="ECO:0000255" key="2">
    <source>
        <dbReference type="PROSITE-ProRule" id="PRU00380"/>
    </source>
</evidence>
<evidence type="ECO:0000255" key="3">
    <source>
        <dbReference type="PROSITE-ProRule" id="PRU00981"/>
    </source>
</evidence>
<evidence type="ECO:0000256" key="4">
    <source>
        <dbReference type="SAM" id="MobiDB-lite"/>
    </source>
</evidence>
<evidence type="ECO:0000269" key="5">
    <source>
    </source>
</evidence>
<evidence type="ECO:0000305" key="6"/>
<protein>
    <recommendedName>
        <fullName>Hairy/enhancer-of-split related with YRPW motif protein 1</fullName>
    </recommendedName>
</protein>
<comment type="function">
    <text evidence="1">Transcriptional repressor which functions as a downstream effector of Notch signaling.</text>
</comment>
<comment type="subcellular location">
    <subcellularLocation>
        <location evidence="2 3">Nucleus</location>
    </subcellularLocation>
</comment>
<comment type="developmental stage">
    <text evidence="5">Expressed following gastrulation. At the 1-somite stage, expressed in the paraxial mesoderm. Subsequently expressed in the telencephalon, the otic vesicles, the somites and the anterior presomitic mesoderm.</text>
</comment>
<comment type="induction">
    <text evidence="5">Expression in the developing embryo is induced by activation of the Notch signaling pathway.</text>
</comment>
<comment type="similarity">
    <text evidence="6">Belongs to the HEY family.</text>
</comment>
<sequence>MKRNHDFSSSDSELDENIEVEKESADENAGANSPLGSMSPSTTSQVQARKRRRGIIEKRRRDRINNSLSELRRLVPSAFEKQGSAKLEKAEILQMTVDHLKMLHAAGGKGYFDAHALAMDYRGLGFRECLAETARYLSIIEGLDNTDPLRIRLVSHLNSYASQREAHSGLGHLAWGSAFGTPPSHLAHHLLLQQQQQQGAPLARSTSSPPSSNSSSPSSSSPSAPSTEPRLSGTVISEAGQTGPLRVPPSTSLPPGLTPPTASKLSPPLLTSLSSLSAFPFPLSAFPLLSPSSLGPATPSSSLGKPYRPWSMEIGAF</sequence>
<dbReference type="EMBL" id="AJ510221">
    <property type="protein sequence ID" value="CAD53342.1"/>
    <property type="molecule type" value="mRNA"/>
</dbReference>
<dbReference type="EMBL" id="BC095317">
    <property type="protein sequence ID" value="AAH95317.1"/>
    <property type="molecule type" value="mRNA"/>
</dbReference>
<dbReference type="RefSeq" id="NP_997726.1">
    <property type="nucleotide sequence ID" value="NM_212561.1"/>
</dbReference>
<dbReference type="SMR" id="Q8AXV6"/>
<dbReference type="FunCoup" id="Q8AXV6">
    <property type="interactions" value="620"/>
</dbReference>
<dbReference type="STRING" id="7955.ENSDARP00000094416"/>
<dbReference type="PaxDb" id="7955-ENSDARP00000094416"/>
<dbReference type="Ensembl" id="ENSDART00000103640">
    <property type="protein sequence ID" value="ENSDARP00000094416"/>
    <property type="gene ID" value="ENSDARG00000070538"/>
</dbReference>
<dbReference type="GeneID" id="58008"/>
<dbReference type="KEGG" id="dre:58008"/>
<dbReference type="AGR" id="ZFIN:ZDB-GENE-000607-70"/>
<dbReference type="CTD" id="23462"/>
<dbReference type="ZFIN" id="ZDB-GENE-000607-70">
    <property type="gene designation" value="hey1"/>
</dbReference>
<dbReference type="eggNOG" id="KOG4304">
    <property type="taxonomic scope" value="Eukaryota"/>
</dbReference>
<dbReference type="HOGENOM" id="CLU_048294_2_0_1"/>
<dbReference type="InParanoid" id="Q8AXV6"/>
<dbReference type="OMA" id="QIPWGGA"/>
<dbReference type="OrthoDB" id="6371181at2759"/>
<dbReference type="PhylomeDB" id="Q8AXV6"/>
<dbReference type="TreeFam" id="TF323617"/>
<dbReference type="PRO" id="PR:Q8AXV6"/>
<dbReference type="Proteomes" id="UP000000437">
    <property type="component" value="Chromosome 19"/>
</dbReference>
<dbReference type="Bgee" id="ENSDARG00000070538">
    <property type="expression patterns" value="Expressed in somite and 53 other cell types or tissues"/>
</dbReference>
<dbReference type="ExpressionAtlas" id="Q8AXV6">
    <property type="expression patterns" value="differential"/>
</dbReference>
<dbReference type="GO" id="GO:0005634">
    <property type="term" value="C:nucleus"/>
    <property type="evidence" value="ECO:0000318"/>
    <property type="project" value="GO_Central"/>
</dbReference>
<dbReference type="GO" id="GO:0046983">
    <property type="term" value="F:protein dimerization activity"/>
    <property type="evidence" value="ECO:0007669"/>
    <property type="project" value="InterPro"/>
</dbReference>
<dbReference type="GO" id="GO:0000978">
    <property type="term" value="F:RNA polymerase II cis-regulatory region sequence-specific DNA binding"/>
    <property type="evidence" value="ECO:0000318"/>
    <property type="project" value="GO_Central"/>
</dbReference>
<dbReference type="GO" id="GO:0001708">
    <property type="term" value="P:cell fate specification"/>
    <property type="evidence" value="ECO:0000315"/>
    <property type="project" value="ZFIN"/>
</dbReference>
<dbReference type="GO" id="GO:0072359">
    <property type="term" value="P:circulatory system development"/>
    <property type="evidence" value="ECO:0000318"/>
    <property type="project" value="GO_Central"/>
</dbReference>
<dbReference type="GO" id="GO:0007219">
    <property type="term" value="P:Notch signaling pathway"/>
    <property type="evidence" value="ECO:0000250"/>
    <property type="project" value="UniProtKB"/>
</dbReference>
<dbReference type="GO" id="GO:0006355">
    <property type="term" value="P:regulation of DNA-templated transcription"/>
    <property type="evidence" value="ECO:0007669"/>
    <property type="project" value="InterPro"/>
</dbReference>
<dbReference type="GO" id="GO:0050767">
    <property type="term" value="P:regulation of neurogenesis"/>
    <property type="evidence" value="ECO:0000318"/>
    <property type="project" value="GO_Central"/>
</dbReference>
<dbReference type="FunFam" id="4.10.280.10:FF:000012">
    <property type="entry name" value="hairy/enhancer-of-split related with YRPW motif protein 1"/>
    <property type="match status" value="1"/>
</dbReference>
<dbReference type="Gene3D" id="6.10.250.980">
    <property type="match status" value="1"/>
</dbReference>
<dbReference type="Gene3D" id="4.10.280.10">
    <property type="entry name" value="Helix-loop-helix DNA-binding domain"/>
    <property type="match status" value="1"/>
</dbReference>
<dbReference type="InterPro" id="IPR011598">
    <property type="entry name" value="bHLH_dom"/>
</dbReference>
<dbReference type="InterPro" id="IPR050370">
    <property type="entry name" value="HES_HEY"/>
</dbReference>
<dbReference type="InterPro" id="IPR036638">
    <property type="entry name" value="HLH_DNA-bd_sf"/>
</dbReference>
<dbReference type="InterPro" id="IPR003650">
    <property type="entry name" value="Orange_dom"/>
</dbReference>
<dbReference type="PANTHER" id="PTHR10985">
    <property type="entry name" value="BASIC HELIX-LOOP-HELIX TRANSCRIPTION FACTOR, HES-RELATED"/>
    <property type="match status" value="1"/>
</dbReference>
<dbReference type="Pfam" id="PF07527">
    <property type="entry name" value="Hairy_orange"/>
    <property type="match status" value="1"/>
</dbReference>
<dbReference type="Pfam" id="PF00010">
    <property type="entry name" value="HLH"/>
    <property type="match status" value="1"/>
</dbReference>
<dbReference type="SMART" id="SM00353">
    <property type="entry name" value="HLH"/>
    <property type="match status" value="1"/>
</dbReference>
<dbReference type="SMART" id="SM00511">
    <property type="entry name" value="ORANGE"/>
    <property type="match status" value="1"/>
</dbReference>
<dbReference type="SUPFAM" id="SSF47459">
    <property type="entry name" value="HLH, helix-loop-helix DNA-binding domain"/>
    <property type="match status" value="1"/>
</dbReference>
<dbReference type="SUPFAM" id="SSF158457">
    <property type="entry name" value="Orange domain-like"/>
    <property type="match status" value="1"/>
</dbReference>
<dbReference type="PROSITE" id="PS50888">
    <property type="entry name" value="BHLH"/>
    <property type="match status" value="1"/>
</dbReference>
<dbReference type="PROSITE" id="PS51054">
    <property type="entry name" value="ORANGE"/>
    <property type="match status" value="1"/>
</dbReference>
<reference key="1">
    <citation type="journal article" date="2003" name="Dev. Genes Evol.">
        <title>Characterization of hey bHLH genes in teleost fish.</title>
        <authorList>
            <person name="Winkler C."/>
            <person name="Elmasri H."/>
            <person name="Klamt B."/>
            <person name="Volff J.-N."/>
            <person name="Gessler M."/>
        </authorList>
    </citation>
    <scope>NUCLEOTIDE SEQUENCE [MRNA]</scope>
    <scope>DEVELOPMENTAL STAGE</scope>
    <scope>INDUCTION</scope>
</reference>
<reference key="2">
    <citation type="submission" date="2005-05" db="EMBL/GenBank/DDBJ databases">
        <authorList>
            <consortium name="NIH - Zebrafish Gene Collection (ZGC) project"/>
        </authorList>
    </citation>
    <scope>NUCLEOTIDE SEQUENCE [LARGE SCALE MRNA]</scope>
    <source>
        <tissue>Embryo</tissue>
    </source>
</reference>
<keyword id="KW-0217">Developmental protein</keyword>
<keyword id="KW-0238">DNA-binding</keyword>
<keyword id="KW-0914">Notch signaling pathway</keyword>
<keyword id="KW-0539">Nucleus</keyword>
<keyword id="KW-1185">Reference proteome</keyword>
<keyword id="KW-0678">Repressor</keyword>
<keyword id="KW-0804">Transcription</keyword>
<keyword id="KW-0805">Transcription regulation</keyword>
<proteinExistence type="evidence at transcript level"/>
<organism>
    <name type="scientific">Danio rerio</name>
    <name type="common">Zebrafish</name>
    <name type="synonym">Brachydanio rerio</name>
    <dbReference type="NCBI Taxonomy" id="7955"/>
    <lineage>
        <taxon>Eukaryota</taxon>
        <taxon>Metazoa</taxon>
        <taxon>Chordata</taxon>
        <taxon>Craniata</taxon>
        <taxon>Vertebrata</taxon>
        <taxon>Euteleostomi</taxon>
        <taxon>Actinopterygii</taxon>
        <taxon>Neopterygii</taxon>
        <taxon>Teleostei</taxon>
        <taxon>Ostariophysi</taxon>
        <taxon>Cypriniformes</taxon>
        <taxon>Danionidae</taxon>
        <taxon>Danioninae</taxon>
        <taxon>Danio</taxon>
    </lineage>
</organism>
<feature type="chain" id="PRO_0000286425" description="Hairy/enhancer-of-split related with YRPW motif protein 1">
    <location>
        <begin position="1"/>
        <end position="317"/>
    </location>
</feature>
<feature type="domain" description="bHLH" evidence="3">
    <location>
        <begin position="48"/>
        <end position="103"/>
    </location>
</feature>
<feature type="domain" description="Orange" evidence="2">
    <location>
        <begin position="121"/>
        <end position="157"/>
    </location>
</feature>
<feature type="region of interest" description="Disordered" evidence="4">
    <location>
        <begin position="1"/>
        <end position="59"/>
    </location>
</feature>
<feature type="region of interest" description="Disordered" evidence="4">
    <location>
        <begin position="193"/>
        <end position="264"/>
    </location>
</feature>
<feature type="short sequence motif" description="YRPW motif">
    <location>
        <begin position="307"/>
        <end position="310"/>
    </location>
</feature>
<feature type="compositionally biased region" description="Polar residues" evidence="4">
    <location>
        <begin position="30"/>
        <end position="47"/>
    </location>
</feature>
<feature type="compositionally biased region" description="Low complexity" evidence="4">
    <location>
        <begin position="193"/>
        <end position="226"/>
    </location>
</feature>
<feature type="compositionally biased region" description="Low complexity" evidence="4">
    <location>
        <begin position="248"/>
        <end position="264"/>
    </location>
</feature>
<name>HEY1_DANRE</name>